<name>EIF3H_RAT</name>
<protein>
    <recommendedName>
        <fullName evidence="2">Eukaryotic translation initiation factor 3 subunit H</fullName>
        <shortName evidence="2">eIF3h</shortName>
    </recommendedName>
    <alternativeName>
        <fullName evidence="2">Eukaryotic translation initiation factor 3 subunit 3</fullName>
    </alternativeName>
    <alternativeName>
        <fullName>eIF-3-gamma</fullName>
    </alternativeName>
    <alternativeName>
        <fullName evidence="2">eIF3 p40 subunit</fullName>
    </alternativeName>
</protein>
<reference key="1">
    <citation type="submission" date="2005-09" db="EMBL/GenBank/DDBJ databases">
        <authorList>
            <person name="Mural R.J."/>
            <person name="Adams M.D."/>
            <person name="Myers E.W."/>
            <person name="Smith H.O."/>
            <person name="Venter J.C."/>
        </authorList>
    </citation>
    <scope>NUCLEOTIDE SEQUENCE [LARGE SCALE GENOMIC DNA]</scope>
</reference>
<reference key="2">
    <citation type="journal article" date="2004" name="Genome Res.">
        <title>The status, quality, and expansion of the NIH full-length cDNA project: the Mammalian Gene Collection (MGC).</title>
        <authorList>
            <consortium name="The MGC Project Team"/>
        </authorList>
    </citation>
    <scope>NUCLEOTIDE SEQUENCE [LARGE SCALE MRNA]</scope>
    <source>
        <tissue>Pituitary</tissue>
    </source>
</reference>
<reference key="3">
    <citation type="journal article" date="2012" name="Nat. Commun.">
        <title>Quantitative maps of protein phosphorylation sites across 14 different rat organs and tissues.</title>
        <authorList>
            <person name="Lundby A."/>
            <person name="Secher A."/>
            <person name="Lage K."/>
            <person name="Nordsborg N.B."/>
            <person name="Dmytriyev A."/>
            <person name="Lundby C."/>
            <person name="Olsen J.V."/>
        </authorList>
    </citation>
    <scope>PHOSPHORYLATION [LARGE SCALE ANALYSIS] AT SER-183</scope>
    <scope>IDENTIFICATION BY MASS SPECTROMETRY [LARGE SCALE ANALYSIS]</scope>
</reference>
<gene>
    <name type="primary">Eif3h</name>
    <name type="synonym">Eif3s3</name>
</gene>
<dbReference type="EMBL" id="BC060586">
    <property type="protein sequence ID" value="AAH60586.1"/>
    <property type="molecule type" value="mRNA"/>
</dbReference>
<dbReference type="EMBL" id="CH473950">
    <property type="protein sequence ID" value="EDM16282.1"/>
    <property type="molecule type" value="Genomic_DNA"/>
</dbReference>
<dbReference type="RefSeq" id="NP_942046.1">
    <property type="nucleotide sequence ID" value="NM_198751.4"/>
</dbReference>
<dbReference type="RefSeq" id="XP_017449979.1">
    <property type="nucleotide sequence ID" value="XM_017594490.1"/>
</dbReference>
<dbReference type="SMR" id="Q6P9U8"/>
<dbReference type="FunCoup" id="Q6P9U8">
    <property type="interactions" value="4092"/>
</dbReference>
<dbReference type="STRING" id="10116.ENSRNOP00000005786"/>
<dbReference type="MEROPS" id="M67.971"/>
<dbReference type="iPTMnet" id="Q6P9U8"/>
<dbReference type="PhosphoSitePlus" id="Q6P9U8"/>
<dbReference type="jPOST" id="Q6P9U8"/>
<dbReference type="PaxDb" id="10116-ENSRNOP00000005786"/>
<dbReference type="GeneID" id="299899"/>
<dbReference type="KEGG" id="rno:299899"/>
<dbReference type="UCSC" id="RGD:735178">
    <property type="organism name" value="rat"/>
</dbReference>
<dbReference type="AGR" id="RGD:735178"/>
<dbReference type="CTD" id="8667"/>
<dbReference type="RGD" id="735178">
    <property type="gene designation" value="Eif3h"/>
</dbReference>
<dbReference type="VEuPathDB" id="HostDB:ENSRNOG00000004252"/>
<dbReference type="eggNOG" id="KOG1560">
    <property type="taxonomic scope" value="Eukaryota"/>
</dbReference>
<dbReference type="HOGENOM" id="CLU_044094_0_0_1"/>
<dbReference type="InParanoid" id="Q6P9U8"/>
<dbReference type="OrthoDB" id="73170at9989"/>
<dbReference type="PhylomeDB" id="Q6P9U8"/>
<dbReference type="TreeFam" id="TF101504"/>
<dbReference type="Reactome" id="R-RNO-156827">
    <property type="pathway name" value="L13a-mediated translational silencing of Ceruloplasmin expression"/>
</dbReference>
<dbReference type="Reactome" id="R-RNO-72649">
    <property type="pathway name" value="Translation initiation complex formation"/>
</dbReference>
<dbReference type="Reactome" id="R-RNO-72689">
    <property type="pathway name" value="Formation of a pool of free 40S subunits"/>
</dbReference>
<dbReference type="Reactome" id="R-RNO-72695">
    <property type="pathway name" value="Formation of the ternary complex, and subsequently, the 43S complex"/>
</dbReference>
<dbReference type="Reactome" id="R-RNO-72702">
    <property type="pathway name" value="Ribosomal scanning and start codon recognition"/>
</dbReference>
<dbReference type="PRO" id="PR:Q6P9U8"/>
<dbReference type="Proteomes" id="UP000002494">
    <property type="component" value="Chromosome 7"/>
</dbReference>
<dbReference type="Proteomes" id="UP000234681">
    <property type="component" value="Chromosome 7"/>
</dbReference>
<dbReference type="Bgee" id="ENSRNOG00000004252">
    <property type="expression patterns" value="Expressed in spleen and 18 other cell types or tissues"/>
</dbReference>
<dbReference type="GO" id="GO:0016282">
    <property type="term" value="C:eukaryotic 43S preinitiation complex"/>
    <property type="evidence" value="ECO:0000318"/>
    <property type="project" value="GO_Central"/>
</dbReference>
<dbReference type="GO" id="GO:0033290">
    <property type="term" value="C:eukaryotic 48S preinitiation complex"/>
    <property type="evidence" value="ECO:0007669"/>
    <property type="project" value="UniProtKB-UniRule"/>
</dbReference>
<dbReference type="GO" id="GO:0005852">
    <property type="term" value="C:eukaryotic translation initiation factor 3 complex"/>
    <property type="evidence" value="ECO:0000250"/>
    <property type="project" value="UniProtKB"/>
</dbReference>
<dbReference type="GO" id="GO:0071541">
    <property type="term" value="C:eukaryotic translation initiation factor 3 complex, eIF3m"/>
    <property type="evidence" value="ECO:0000266"/>
    <property type="project" value="RGD"/>
</dbReference>
<dbReference type="GO" id="GO:0140492">
    <property type="term" value="F:metal-dependent deubiquitinase activity"/>
    <property type="evidence" value="ECO:0000266"/>
    <property type="project" value="RGD"/>
</dbReference>
<dbReference type="GO" id="GO:0008237">
    <property type="term" value="F:metallopeptidase activity"/>
    <property type="evidence" value="ECO:0000318"/>
    <property type="project" value="GO_Central"/>
</dbReference>
<dbReference type="GO" id="GO:0003743">
    <property type="term" value="F:translation initiation factor activity"/>
    <property type="evidence" value="ECO:0007669"/>
    <property type="project" value="UniProtKB-UniRule"/>
</dbReference>
<dbReference type="GO" id="GO:0001732">
    <property type="term" value="P:formation of cytoplasmic translation initiation complex"/>
    <property type="evidence" value="ECO:0007669"/>
    <property type="project" value="UniProtKB-UniRule"/>
</dbReference>
<dbReference type="GO" id="GO:0032435">
    <property type="term" value="P:negative regulation of proteasomal ubiquitin-dependent protein catabolic process"/>
    <property type="evidence" value="ECO:0000266"/>
    <property type="project" value="RGD"/>
</dbReference>
<dbReference type="GO" id="GO:0006413">
    <property type="term" value="P:translational initiation"/>
    <property type="evidence" value="ECO:0000250"/>
    <property type="project" value="UniProtKB"/>
</dbReference>
<dbReference type="CDD" id="cd08065">
    <property type="entry name" value="MPN_eIF3h"/>
    <property type="match status" value="1"/>
</dbReference>
<dbReference type="FunFam" id="3.40.140.10:FF:000020">
    <property type="entry name" value="Eukaryotic translation initiation factor 3 subunit H"/>
    <property type="match status" value="1"/>
</dbReference>
<dbReference type="Gene3D" id="3.40.140.10">
    <property type="entry name" value="Cytidine Deaminase, domain 2"/>
    <property type="match status" value="1"/>
</dbReference>
<dbReference type="HAMAP" id="MF_03007">
    <property type="entry name" value="eIF3h"/>
    <property type="match status" value="1"/>
</dbReference>
<dbReference type="InterPro" id="IPR027524">
    <property type="entry name" value="eIF3h"/>
</dbReference>
<dbReference type="InterPro" id="IPR045810">
    <property type="entry name" value="eIF3h_C"/>
</dbReference>
<dbReference type="InterPro" id="IPR000555">
    <property type="entry name" value="JAMM/MPN+_dom"/>
</dbReference>
<dbReference type="InterPro" id="IPR050242">
    <property type="entry name" value="JAMM_MPN+_peptidase_M67A"/>
</dbReference>
<dbReference type="InterPro" id="IPR037518">
    <property type="entry name" value="MPN"/>
</dbReference>
<dbReference type="PANTHER" id="PTHR10410">
    <property type="entry name" value="EUKARYOTIC TRANSLATION INITIATION FACTOR 3 -RELATED"/>
    <property type="match status" value="1"/>
</dbReference>
<dbReference type="Pfam" id="PF19445">
    <property type="entry name" value="eIF3h_C"/>
    <property type="match status" value="1"/>
</dbReference>
<dbReference type="Pfam" id="PF01398">
    <property type="entry name" value="JAB"/>
    <property type="match status" value="1"/>
</dbReference>
<dbReference type="SMART" id="SM00232">
    <property type="entry name" value="JAB_MPN"/>
    <property type="match status" value="1"/>
</dbReference>
<dbReference type="PROSITE" id="PS50249">
    <property type="entry name" value="MPN"/>
    <property type="match status" value="1"/>
</dbReference>
<proteinExistence type="evidence at protein level"/>
<organism>
    <name type="scientific">Rattus norvegicus</name>
    <name type="common">Rat</name>
    <dbReference type="NCBI Taxonomy" id="10116"/>
    <lineage>
        <taxon>Eukaryota</taxon>
        <taxon>Metazoa</taxon>
        <taxon>Chordata</taxon>
        <taxon>Craniata</taxon>
        <taxon>Vertebrata</taxon>
        <taxon>Euteleostomi</taxon>
        <taxon>Mammalia</taxon>
        <taxon>Eutheria</taxon>
        <taxon>Euarchontoglires</taxon>
        <taxon>Glires</taxon>
        <taxon>Rodentia</taxon>
        <taxon>Myomorpha</taxon>
        <taxon>Muroidea</taxon>
        <taxon>Muridae</taxon>
        <taxon>Murinae</taxon>
        <taxon>Rattus</taxon>
    </lineage>
</organism>
<comment type="function">
    <text evidence="2">Component of the eukaryotic translation initiation factor 3 (eIF-3) complex, which is required for several steps in the initiation of protein synthesis. The eIF-3 complex associates with the 40S ribosome and facilitates the recruitment of eIF-1, eIF-1A, eIF-2:GTP:methionyl-tRNAi and eIF-5 to form the 43S pre-initiation complex (43S PIC). The eIF-3 complex stimulates mRNA recruitment to the 43S PIC and scanning of the mRNA for AUG recognition. The eIF-3 complex is also required for disassembly and recycling of post-termination ribosomal complexes and subsequently prevents premature joining of the 40S and 60S ribosomal subunits prior to initiation. The eIF-3 complex specifically targets and initiates translation of a subset of mRNAs involved in cell proliferation, including cell cycling, differentiation and apoptosis, and uses different modes of RNA stem-loop binding to exert either translational activation or repression.</text>
</comment>
<comment type="subunit">
    <text evidence="1 2">Component of the eukaryotic translation initiation factor 3 (eIF-3) complex, which is composed of 13 subunits: EIF3A, EIF3B, EIF3C, EIF3D, EIF3E, EIF3F, EIF3G, EIF3H, EIF3I, EIF3J, EIF3K, EIF3L and EIF3M. The eIF-3 complex appears to include 3 stable modules: module A is composed of EIF3A, EIF3B, EIF3G and EIF3I; module B is composed of EIF3F, EIF3H, and EIF3M; and module C is composed of EIF3C, EIF3D, EIF3E, EIF3K and EIF3L. EIF3C of module C binds EIF3B of module A and EIF3H of module B, thereby linking the three modules. EIF3J is a labile subunit that binds to the eIF-3 complex via EIF3B. The eIF-3 complex interacts with RPS6KB1 under conditions of nutrient depletion. Mitogenic stimulation leads to binding and activation of a complex composed of MTOR and RPTOR, leading to phosphorylation and release of RPS6KB1 and binding of EIF4B to eIF-3. Interacts with RNF139; the interaction leads to protein translation inhibitions in a ubiquitination-dependent manner. Interacts with DHX33; the interaction is independent of RNA (By similarity).</text>
</comment>
<comment type="subcellular location">
    <subcellularLocation>
        <location evidence="2">Cytoplasm</location>
    </subcellularLocation>
</comment>
<comment type="similarity">
    <text evidence="2">Belongs to the eIF-3 subunit H family.</text>
</comment>
<keyword id="KW-0963">Cytoplasm</keyword>
<keyword id="KW-0396">Initiation factor</keyword>
<keyword id="KW-1017">Isopeptide bond</keyword>
<keyword id="KW-0597">Phosphoprotein</keyword>
<keyword id="KW-0648">Protein biosynthesis</keyword>
<keyword id="KW-1185">Reference proteome</keyword>
<keyword id="KW-0832">Ubl conjugation</keyword>
<sequence length="352" mass="39905">MASRKEGTGSTATSSSSTGGAVGKGKGKGGSGDSAVKQVQIDGLVVLKIIKHYQEEGQGTEVVQGVLLGLVVEDRLEITNCFPFPQHTEDDADFDEVQYQMEMMRSLRHVNIDHLHVGWYQSTYYGSFVTRALLDSQFSYQHAIEESVVLIYDPIKTAQGSLSLKAYRLTPKLMEVCKEKDFSPEALKKANITFEHMFEEVPIVIKNSHLINVLMWELEKKSAVADKHELLSLASSNHLGKNLQLLMDRVDEMSQDIIKYNTYMRNSSKQQQQKHQYQQRRQQENMQRQSRGEPPLPEEDLSKLFKPHQAPARMDSLLIAGQINTYCQNIKEFTAQNLGKLFMAQALQEYSN</sequence>
<evidence type="ECO:0000250" key="1">
    <source>
        <dbReference type="UniProtKB" id="O15372"/>
    </source>
</evidence>
<evidence type="ECO:0000255" key="2">
    <source>
        <dbReference type="HAMAP-Rule" id="MF_03007"/>
    </source>
</evidence>
<evidence type="ECO:0000255" key="3">
    <source>
        <dbReference type="PROSITE-ProRule" id="PRU01182"/>
    </source>
</evidence>
<evidence type="ECO:0000256" key="4">
    <source>
        <dbReference type="SAM" id="MobiDB-lite"/>
    </source>
</evidence>
<evidence type="ECO:0007744" key="5">
    <source>
    </source>
</evidence>
<feature type="chain" id="PRO_0000365173" description="Eukaryotic translation initiation factor 3 subunit H">
    <location>
        <begin position="1"/>
        <end position="352"/>
    </location>
</feature>
<feature type="domain" description="MPN" evidence="3">
    <location>
        <begin position="39"/>
        <end position="173"/>
    </location>
</feature>
<feature type="region of interest" description="Disordered" evidence="4">
    <location>
        <begin position="1"/>
        <end position="34"/>
    </location>
</feature>
<feature type="region of interest" description="Disordered" evidence="4">
    <location>
        <begin position="265"/>
        <end position="300"/>
    </location>
</feature>
<feature type="compositionally biased region" description="Low complexity" evidence="4">
    <location>
        <begin position="8"/>
        <end position="19"/>
    </location>
</feature>
<feature type="compositionally biased region" description="Gly residues" evidence="4">
    <location>
        <begin position="20"/>
        <end position="32"/>
    </location>
</feature>
<feature type="compositionally biased region" description="Low complexity" evidence="4">
    <location>
        <begin position="270"/>
        <end position="289"/>
    </location>
</feature>
<feature type="modified residue" description="Phosphoserine" evidence="1">
    <location>
        <position position="3"/>
    </location>
</feature>
<feature type="modified residue" description="Phosphoserine" evidence="5">
    <location>
        <position position="183"/>
    </location>
</feature>
<feature type="cross-link" description="Glycyl lysine isopeptide (Lys-Gly) (interchain with G-Cter in SUMO2)" evidence="1">
    <location>
        <position position="303"/>
    </location>
</feature>
<accession>Q6P9U8</accession>